<accession>P76559</accession>
<accession>Q2MAI5</accession>
<sequence length="347" mass="38746">MRYRIFLLFFFALLPTSLVWAAPAQRAFSDWQVTCNNQNFCVARNTGDHNGLVMTLSRSAGAHTDAVLRIERGGLKSPEASEGEIAPRLLLDGEPLALSGDKWRISPWLLVTDDTATITAFLQMIQEGKAITLRDGDQTISLSGLKAALLFIDAQQKRVGSETAWIKKGDEPPLSVPPAPALKEVAVVNPTPTPLSLEERNDLLDYGNWRMNGLRCSLDPLRREVNVTALTDDKALMMISCEAGAYNTIDLAWIVSRKKPLASRPVRLRLPFNNGQETNELELMNATFDEKSRELVTLAKGRGLSDCGIQARWRFDGQRFRLVRYAAEPTCDNWHGPDAWPTLWITR</sequence>
<evidence type="ECO:0000255" key="1"/>
<feature type="signal peptide" evidence="1">
    <location>
        <begin position="1"/>
        <end position="21"/>
    </location>
</feature>
<feature type="chain" id="PRO_0000013890" description="Uncharacterized protein YpfG">
    <location>
        <begin position="22"/>
        <end position="347"/>
    </location>
</feature>
<gene>
    <name type="primary">ypfG</name>
    <name type="ordered locus">b2466</name>
    <name type="ordered locus">JW2450</name>
</gene>
<protein>
    <recommendedName>
        <fullName>Uncharacterized protein YpfG</fullName>
    </recommendedName>
</protein>
<dbReference type="EMBL" id="U00096">
    <property type="protein sequence ID" value="AAC75519.1"/>
    <property type="molecule type" value="Genomic_DNA"/>
</dbReference>
<dbReference type="EMBL" id="AP009048">
    <property type="protein sequence ID" value="BAE76721.1"/>
    <property type="molecule type" value="Genomic_DNA"/>
</dbReference>
<dbReference type="PIR" id="A65022">
    <property type="entry name" value="A65022"/>
</dbReference>
<dbReference type="RefSeq" id="NP_416961.1">
    <property type="nucleotide sequence ID" value="NC_000913.3"/>
</dbReference>
<dbReference type="RefSeq" id="WP_001270542.1">
    <property type="nucleotide sequence ID" value="NZ_LN832404.1"/>
</dbReference>
<dbReference type="SMR" id="P76559"/>
<dbReference type="BioGRID" id="4262215">
    <property type="interactions" value="14"/>
</dbReference>
<dbReference type="FunCoup" id="P76559">
    <property type="interactions" value="15"/>
</dbReference>
<dbReference type="IntAct" id="P76559">
    <property type="interactions" value="2"/>
</dbReference>
<dbReference type="STRING" id="511145.b2466"/>
<dbReference type="PaxDb" id="511145-b2466"/>
<dbReference type="EnsemblBacteria" id="AAC75519">
    <property type="protein sequence ID" value="AAC75519"/>
    <property type="gene ID" value="b2466"/>
</dbReference>
<dbReference type="GeneID" id="946828"/>
<dbReference type="KEGG" id="ecj:JW2450"/>
<dbReference type="KEGG" id="eco:b2466"/>
<dbReference type="KEGG" id="ecoc:C3026_13680"/>
<dbReference type="PATRIC" id="fig|511145.12.peg.2560"/>
<dbReference type="EchoBASE" id="EB3946"/>
<dbReference type="eggNOG" id="COG5342">
    <property type="taxonomic scope" value="Bacteria"/>
</dbReference>
<dbReference type="HOGENOM" id="CLU_043396_2_0_6"/>
<dbReference type="InParanoid" id="P76559"/>
<dbReference type="OMA" id="WQITCNN"/>
<dbReference type="OrthoDB" id="6183301at2"/>
<dbReference type="PhylomeDB" id="P76559"/>
<dbReference type="BioCyc" id="EcoCyc:G7295-MONOMER"/>
<dbReference type="PRO" id="PR:P76559"/>
<dbReference type="Proteomes" id="UP000000625">
    <property type="component" value="Chromosome"/>
</dbReference>
<dbReference type="InterPro" id="IPR009560">
    <property type="entry name" value="DUF1176"/>
</dbReference>
<dbReference type="Pfam" id="PF06674">
    <property type="entry name" value="DUF1176"/>
    <property type="match status" value="1"/>
</dbReference>
<proteinExistence type="inferred from homology"/>
<reference key="1">
    <citation type="journal article" date="1997" name="Science">
        <title>The complete genome sequence of Escherichia coli K-12.</title>
        <authorList>
            <person name="Blattner F.R."/>
            <person name="Plunkett G. III"/>
            <person name="Bloch C.A."/>
            <person name="Perna N.T."/>
            <person name="Burland V."/>
            <person name="Riley M."/>
            <person name="Collado-Vides J."/>
            <person name="Glasner J.D."/>
            <person name="Rode C.K."/>
            <person name="Mayhew G.F."/>
            <person name="Gregor J."/>
            <person name="Davis N.W."/>
            <person name="Kirkpatrick H.A."/>
            <person name="Goeden M.A."/>
            <person name="Rose D.J."/>
            <person name="Mau B."/>
            <person name="Shao Y."/>
        </authorList>
    </citation>
    <scope>NUCLEOTIDE SEQUENCE [LARGE SCALE GENOMIC DNA]</scope>
    <source>
        <strain>K12 / MG1655 / ATCC 47076</strain>
    </source>
</reference>
<reference key="2">
    <citation type="journal article" date="2006" name="Mol. Syst. Biol.">
        <title>Highly accurate genome sequences of Escherichia coli K-12 strains MG1655 and W3110.</title>
        <authorList>
            <person name="Hayashi K."/>
            <person name="Morooka N."/>
            <person name="Yamamoto Y."/>
            <person name="Fujita K."/>
            <person name="Isono K."/>
            <person name="Choi S."/>
            <person name="Ohtsubo E."/>
            <person name="Baba T."/>
            <person name="Wanner B.L."/>
            <person name="Mori H."/>
            <person name="Horiuchi T."/>
        </authorList>
    </citation>
    <scope>NUCLEOTIDE SEQUENCE [LARGE SCALE GENOMIC DNA]</scope>
    <source>
        <strain>K12 / W3110 / ATCC 27325 / DSM 5911</strain>
    </source>
</reference>
<name>YPFG_ECOLI</name>
<keyword id="KW-1185">Reference proteome</keyword>
<keyword id="KW-0732">Signal</keyword>
<organism>
    <name type="scientific">Escherichia coli (strain K12)</name>
    <dbReference type="NCBI Taxonomy" id="83333"/>
    <lineage>
        <taxon>Bacteria</taxon>
        <taxon>Pseudomonadati</taxon>
        <taxon>Pseudomonadota</taxon>
        <taxon>Gammaproteobacteria</taxon>
        <taxon>Enterobacterales</taxon>
        <taxon>Enterobacteriaceae</taxon>
        <taxon>Escherichia</taxon>
    </lineage>
</organism>